<reference key="1">
    <citation type="journal article" date="2009" name="PLoS Genet.">
        <title>Organised genome dynamics in the Escherichia coli species results in highly diverse adaptive paths.</title>
        <authorList>
            <person name="Touchon M."/>
            <person name="Hoede C."/>
            <person name="Tenaillon O."/>
            <person name="Barbe V."/>
            <person name="Baeriswyl S."/>
            <person name="Bidet P."/>
            <person name="Bingen E."/>
            <person name="Bonacorsi S."/>
            <person name="Bouchier C."/>
            <person name="Bouvet O."/>
            <person name="Calteau A."/>
            <person name="Chiapello H."/>
            <person name="Clermont O."/>
            <person name="Cruveiller S."/>
            <person name="Danchin A."/>
            <person name="Diard M."/>
            <person name="Dossat C."/>
            <person name="Karoui M.E."/>
            <person name="Frapy E."/>
            <person name="Garry L."/>
            <person name="Ghigo J.M."/>
            <person name="Gilles A.M."/>
            <person name="Johnson J."/>
            <person name="Le Bouguenec C."/>
            <person name="Lescat M."/>
            <person name="Mangenot S."/>
            <person name="Martinez-Jehanne V."/>
            <person name="Matic I."/>
            <person name="Nassif X."/>
            <person name="Oztas S."/>
            <person name="Petit M.A."/>
            <person name="Pichon C."/>
            <person name="Rouy Z."/>
            <person name="Ruf C.S."/>
            <person name="Schneider D."/>
            <person name="Tourret J."/>
            <person name="Vacherie B."/>
            <person name="Vallenet D."/>
            <person name="Medigue C."/>
            <person name="Rocha E.P.C."/>
            <person name="Denamur E."/>
        </authorList>
    </citation>
    <scope>NUCLEOTIDE SEQUENCE [LARGE SCALE GENOMIC DNA]</scope>
    <source>
        <strain>UMN026 / ExPEC</strain>
    </source>
</reference>
<accession>B7NE79</accession>
<comment type="function">
    <text evidence="1">Sulfur carrier protein involved in sulfur trafficking in the cell. Part of a sulfur-relay system required for 2-thiolation during synthesis of 2-thiouridine of the modified wobble base 5-methylaminomethyl-2-thiouridine (mnm(5)s(2)U) in tRNA. Interacts with IscS and stimulates its cysteine desulfurase activity. Accepts an activated sulfur from IscS, which is then transferred to TusD, and thus determines the direction of sulfur flow from IscS to 2-thiouridine formation. Also appears to be involved in sulfur transfer for the biosynthesis of molybdopterin.</text>
</comment>
<comment type="pathway">
    <text evidence="1">tRNA modification.</text>
</comment>
<comment type="subunit">
    <text evidence="1">Interacts with IscS.</text>
</comment>
<comment type="subcellular location">
    <subcellularLocation>
        <location evidence="1">Cytoplasm</location>
    </subcellularLocation>
</comment>
<comment type="similarity">
    <text evidence="1">Belongs to the sulfur carrier protein TusA family.</text>
</comment>
<name>TUSA_ECOLU</name>
<sequence length="81" mass="9197">MTDLFSSPDHTLDALGLRCPEPVMMVRKTVRNMQPGETLLIIADDPATTRDIPGFCTFMEHELVAKETDELPYRYLIRKSG</sequence>
<protein>
    <recommendedName>
        <fullName evidence="1">Sulfur carrier protein TusA</fullName>
    </recommendedName>
    <alternativeName>
        <fullName evidence="1">Sulfur mediator TusA</fullName>
    </alternativeName>
    <alternativeName>
        <fullName evidence="1">Sulfur transfer protein TusA</fullName>
    </alternativeName>
    <alternativeName>
        <fullName evidence="1">tRNA 2-thiouridine synthesizing protein A</fullName>
    </alternativeName>
</protein>
<gene>
    <name evidence="1" type="primary">tusA</name>
    <name type="ordered locus">ECUMN_3933</name>
</gene>
<feature type="chain" id="PRO_1000199917" description="Sulfur carrier protein TusA">
    <location>
        <begin position="1"/>
        <end position="81"/>
    </location>
</feature>
<feature type="active site" description="Cysteine persulfide intermediate" evidence="1">
    <location>
        <position position="19"/>
    </location>
</feature>
<keyword id="KW-0963">Cytoplasm</keyword>
<keyword id="KW-0819">tRNA processing</keyword>
<evidence type="ECO:0000255" key="1">
    <source>
        <dbReference type="HAMAP-Rule" id="MF_00413"/>
    </source>
</evidence>
<proteinExistence type="inferred from homology"/>
<organism>
    <name type="scientific">Escherichia coli O17:K52:H18 (strain UMN026 / ExPEC)</name>
    <dbReference type="NCBI Taxonomy" id="585056"/>
    <lineage>
        <taxon>Bacteria</taxon>
        <taxon>Pseudomonadati</taxon>
        <taxon>Pseudomonadota</taxon>
        <taxon>Gammaproteobacteria</taxon>
        <taxon>Enterobacterales</taxon>
        <taxon>Enterobacteriaceae</taxon>
        <taxon>Escherichia</taxon>
    </lineage>
</organism>
<dbReference type="EMBL" id="CU928163">
    <property type="protein sequence ID" value="CAR15079.1"/>
    <property type="molecule type" value="Genomic_DNA"/>
</dbReference>
<dbReference type="RefSeq" id="WP_000130620.1">
    <property type="nucleotide sequence ID" value="NC_011751.1"/>
</dbReference>
<dbReference type="RefSeq" id="YP_002414584.1">
    <property type="nucleotide sequence ID" value="NC_011751.1"/>
</dbReference>
<dbReference type="SMR" id="B7NE79"/>
<dbReference type="STRING" id="585056.ECUMN_3933"/>
<dbReference type="KEGG" id="eum:ECUMN_3933"/>
<dbReference type="PATRIC" id="fig|585056.7.peg.4107"/>
<dbReference type="HOGENOM" id="CLU_165255_5_0_6"/>
<dbReference type="Proteomes" id="UP000007097">
    <property type="component" value="Chromosome"/>
</dbReference>
<dbReference type="GO" id="GO:0005737">
    <property type="term" value="C:cytoplasm"/>
    <property type="evidence" value="ECO:0007669"/>
    <property type="project" value="UniProtKB-SubCell"/>
</dbReference>
<dbReference type="GO" id="GO:0097163">
    <property type="term" value="F:sulfur carrier activity"/>
    <property type="evidence" value="ECO:0007669"/>
    <property type="project" value="UniProtKB-UniRule"/>
</dbReference>
<dbReference type="GO" id="GO:0002143">
    <property type="term" value="P:tRNA wobble position uridine thiolation"/>
    <property type="evidence" value="ECO:0007669"/>
    <property type="project" value="InterPro"/>
</dbReference>
<dbReference type="CDD" id="cd03423">
    <property type="entry name" value="SirA"/>
    <property type="match status" value="1"/>
</dbReference>
<dbReference type="FunFam" id="3.30.110.40:FF:000002">
    <property type="entry name" value="Sulfur carrier protein TusA"/>
    <property type="match status" value="1"/>
</dbReference>
<dbReference type="Gene3D" id="3.30.110.40">
    <property type="entry name" value="TusA-like domain"/>
    <property type="match status" value="1"/>
</dbReference>
<dbReference type="HAMAP" id="MF_00413">
    <property type="entry name" value="Thiourid_synth_A"/>
    <property type="match status" value="1"/>
</dbReference>
<dbReference type="InterPro" id="IPR022931">
    <property type="entry name" value="Sulphur_carrier_TusA"/>
</dbReference>
<dbReference type="InterPro" id="IPR001455">
    <property type="entry name" value="TusA-like"/>
</dbReference>
<dbReference type="InterPro" id="IPR036868">
    <property type="entry name" value="TusA-like_sf"/>
</dbReference>
<dbReference type="NCBIfam" id="NF001423">
    <property type="entry name" value="PRK00299.1"/>
    <property type="match status" value="1"/>
</dbReference>
<dbReference type="PANTHER" id="PTHR33279:SF2">
    <property type="entry name" value="SULFUR CARRIER PROTEIN TUSA"/>
    <property type="match status" value="1"/>
</dbReference>
<dbReference type="PANTHER" id="PTHR33279">
    <property type="entry name" value="SULFUR CARRIER PROTEIN YEDF-RELATED"/>
    <property type="match status" value="1"/>
</dbReference>
<dbReference type="Pfam" id="PF01206">
    <property type="entry name" value="TusA"/>
    <property type="match status" value="1"/>
</dbReference>
<dbReference type="SUPFAM" id="SSF64307">
    <property type="entry name" value="SirA-like"/>
    <property type="match status" value="1"/>
</dbReference>
<dbReference type="PROSITE" id="PS01148">
    <property type="entry name" value="UPF0033"/>
    <property type="match status" value="1"/>
</dbReference>